<dbReference type="EMBL" id="CP000462">
    <property type="protein sequence ID" value="ABK39067.1"/>
    <property type="molecule type" value="Genomic_DNA"/>
</dbReference>
<dbReference type="RefSeq" id="WP_011707073.1">
    <property type="nucleotide sequence ID" value="NC_008570.1"/>
</dbReference>
<dbReference type="RefSeq" id="YP_857793.1">
    <property type="nucleotide sequence ID" value="NC_008570.1"/>
</dbReference>
<dbReference type="SMR" id="A0KNE2"/>
<dbReference type="STRING" id="380703.AHA_3302"/>
<dbReference type="EnsemblBacteria" id="ABK39067">
    <property type="protein sequence ID" value="ABK39067"/>
    <property type="gene ID" value="AHA_3302"/>
</dbReference>
<dbReference type="GeneID" id="4490964"/>
<dbReference type="KEGG" id="aha:AHA_3302"/>
<dbReference type="PATRIC" id="fig|380703.7.peg.3298"/>
<dbReference type="eggNOG" id="COG0858">
    <property type="taxonomic scope" value="Bacteria"/>
</dbReference>
<dbReference type="HOGENOM" id="CLU_089475_5_0_6"/>
<dbReference type="OrthoDB" id="307788at2"/>
<dbReference type="Proteomes" id="UP000000756">
    <property type="component" value="Chromosome"/>
</dbReference>
<dbReference type="GO" id="GO:0005829">
    <property type="term" value="C:cytosol"/>
    <property type="evidence" value="ECO:0007669"/>
    <property type="project" value="TreeGrafter"/>
</dbReference>
<dbReference type="GO" id="GO:0043024">
    <property type="term" value="F:ribosomal small subunit binding"/>
    <property type="evidence" value="ECO:0007669"/>
    <property type="project" value="TreeGrafter"/>
</dbReference>
<dbReference type="GO" id="GO:0030490">
    <property type="term" value="P:maturation of SSU-rRNA"/>
    <property type="evidence" value="ECO:0007669"/>
    <property type="project" value="UniProtKB-UniRule"/>
</dbReference>
<dbReference type="FunFam" id="3.30.300.20:FF:000007">
    <property type="entry name" value="Ribosome-binding factor A"/>
    <property type="match status" value="1"/>
</dbReference>
<dbReference type="Gene3D" id="3.30.300.20">
    <property type="match status" value="1"/>
</dbReference>
<dbReference type="HAMAP" id="MF_00003">
    <property type="entry name" value="RbfA"/>
    <property type="match status" value="1"/>
</dbReference>
<dbReference type="InterPro" id="IPR015946">
    <property type="entry name" value="KH_dom-like_a/b"/>
</dbReference>
<dbReference type="InterPro" id="IPR000238">
    <property type="entry name" value="RbfA"/>
</dbReference>
<dbReference type="InterPro" id="IPR023799">
    <property type="entry name" value="RbfA_dom_sf"/>
</dbReference>
<dbReference type="InterPro" id="IPR020053">
    <property type="entry name" value="Ribosome-bd_factorA_CS"/>
</dbReference>
<dbReference type="NCBIfam" id="TIGR00082">
    <property type="entry name" value="rbfA"/>
    <property type="match status" value="1"/>
</dbReference>
<dbReference type="PANTHER" id="PTHR33515">
    <property type="entry name" value="RIBOSOME-BINDING FACTOR A, CHLOROPLASTIC-RELATED"/>
    <property type="match status" value="1"/>
</dbReference>
<dbReference type="PANTHER" id="PTHR33515:SF1">
    <property type="entry name" value="RIBOSOME-BINDING FACTOR A, CHLOROPLASTIC-RELATED"/>
    <property type="match status" value="1"/>
</dbReference>
<dbReference type="Pfam" id="PF02033">
    <property type="entry name" value="RBFA"/>
    <property type="match status" value="1"/>
</dbReference>
<dbReference type="SUPFAM" id="SSF89919">
    <property type="entry name" value="Ribosome-binding factor A, RbfA"/>
    <property type="match status" value="1"/>
</dbReference>
<dbReference type="PROSITE" id="PS01319">
    <property type="entry name" value="RBFA"/>
    <property type="match status" value="1"/>
</dbReference>
<protein>
    <recommendedName>
        <fullName evidence="1">Ribosome-binding factor A</fullName>
    </recommendedName>
</protein>
<evidence type="ECO:0000255" key="1">
    <source>
        <dbReference type="HAMAP-Rule" id="MF_00003"/>
    </source>
</evidence>
<evidence type="ECO:0000256" key="2">
    <source>
        <dbReference type="SAM" id="MobiDB-lite"/>
    </source>
</evidence>
<accession>A0KNE2</accession>
<name>RBFA_AERHH</name>
<gene>
    <name evidence="1" type="primary">rbfA</name>
    <name type="ordered locus">AHA_3302</name>
</gene>
<proteinExistence type="inferred from homology"/>
<comment type="function">
    <text evidence="1">One of several proteins that assist in the late maturation steps of the functional core of the 30S ribosomal subunit. Associates with free 30S ribosomal subunits (but not with 30S subunits that are part of 70S ribosomes or polysomes). Required for efficient processing of 16S rRNA. May interact with the 5'-terminal helix region of 16S rRNA.</text>
</comment>
<comment type="subunit">
    <text evidence="1">Monomer. Binds 30S ribosomal subunits, but not 50S ribosomal subunits or 70S ribosomes.</text>
</comment>
<comment type="subcellular location">
    <subcellularLocation>
        <location evidence="1">Cytoplasm</location>
    </subcellularLocation>
</comment>
<comment type="similarity">
    <text evidence="1">Belongs to the RbfA family.</text>
</comment>
<reference key="1">
    <citation type="journal article" date="2006" name="J. Bacteriol.">
        <title>Genome sequence of Aeromonas hydrophila ATCC 7966T: jack of all trades.</title>
        <authorList>
            <person name="Seshadri R."/>
            <person name="Joseph S.W."/>
            <person name="Chopra A.K."/>
            <person name="Sha J."/>
            <person name="Shaw J."/>
            <person name="Graf J."/>
            <person name="Haft D.H."/>
            <person name="Wu M."/>
            <person name="Ren Q."/>
            <person name="Rosovitz M.J."/>
            <person name="Madupu R."/>
            <person name="Tallon L."/>
            <person name="Kim M."/>
            <person name="Jin S."/>
            <person name="Vuong H."/>
            <person name="Stine O.C."/>
            <person name="Ali A."/>
            <person name="Horneman A.J."/>
            <person name="Heidelberg J.F."/>
        </authorList>
    </citation>
    <scope>NUCLEOTIDE SEQUENCE [LARGE SCALE GENOMIC DNA]</scope>
    <source>
        <strain>ATCC 7966 / DSM 30187 / BCRC 13018 / CCUG 14551 / JCM 1027 / KCTC 2358 / NCIMB 9240 / NCTC 8049</strain>
    </source>
</reference>
<keyword id="KW-0963">Cytoplasm</keyword>
<keyword id="KW-1185">Reference proteome</keyword>
<keyword id="KW-0690">Ribosome biogenesis</keyword>
<feature type="chain" id="PRO_1000000062" description="Ribosome-binding factor A">
    <location>
        <begin position="1"/>
        <end position="144"/>
    </location>
</feature>
<feature type="region of interest" description="Disordered" evidence="2">
    <location>
        <begin position="120"/>
        <end position="144"/>
    </location>
</feature>
<feature type="compositionally biased region" description="Acidic residues" evidence="2">
    <location>
        <begin position="129"/>
        <end position="144"/>
    </location>
</feature>
<organism>
    <name type="scientific">Aeromonas hydrophila subsp. hydrophila (strain ATCC 7966 / DSM 30187 / BCRC 13018 / CCUG 14551 / JCM 1027 / KCTC 2358 / NCIMB 9240 / NCTC 8049)</name>
    <dbReference type="NCBI Taxonomy" id="380703"/>
    <lineage>
        <taxon>Bacteria</taxon>
        <taxon>Pseudomonadati</taxon>
        <taxon>Pseudomonadota</taxon>
        <taxon>Gammaproteobacteria</taxon>
        <taxon>Aeromonadales</taxon>
        <taxon>Aeromonadaceae</taxon>
        <taxon>Aeromonas</taxon>
    </lineage>
</organism>
<sequence>MAREFSRTRRVGQQIQREIALILQREVKDPRIGMVTVSDVEVSRDLNYAKVYVTFLQLENDAERIKEGLKALTEAAGYIRSLLGSAMRLRVVPELRFFYDQTLVEGMRLSNLVTNTIREDKRRMAESGREEDDAAPDETTEDNA</sequence>